<name>Y2060_ARATH</name>
<dbReference type="EMBL" id="U93215">
    <property type="protein sequence ID" value="AAB63076.1"/>
    <property type="status" value="ALT_SEQ"/>
    <property type="molecule type" value="Genomic_DNA"/>
</dbReference>
<dbReference type="EMBL" id="U93215">
    <property type="protein sequence ID" value="AAB63077.1"/>
    <property type="status" value="ALT_SEQ"/>
    <property type="molecule type" value="Genomic_DNA"/>
</dbReference>
<dbReference type="EMBL" id="CP002685">
    <property type="protein sequence ID" value="AEC08413.1"/>
    <property type="molecule type" value="Genomic_DNA"/>
</dbReference>
<dbReference type="EMBL" id="CP002685">
    <property type="protein sequence ID" value="AEC08414.1"/>
    <property type="molecule type" value="Genomic_DNA"/>
</dbReference>
<dbReference type="EMBL" id="CP002685">
    <property type="protein sequence ID" value="AEC08415.1"/>
    <property type="molecule type" value="Genomic_DNA"/>
</dbReference>
<dbReference type="EMBL" id="CP002685">
    <property type="protein sequence ID" value="AEC08416.1"/>
    <property type="molecule type" value="Genomic_DNA"/>
</dbReference>
<dbReference type="EMBL" id="AK175155">
    <property type="protein sequence ID" value="BAD42918.1"/>
    <property type="molecule type" value="mRNA"/>
</dbReference>
<dbReference type="EMBL" id="AK176077">
    <property type="protein sequence ID" value="BAD43840.1"/>
    <property type="molecule type" value="mRNA"/>
</dbReference>
<dbReference type="EMBL" id="AK176544">
    <property type="protein sequence ID" value="BAD44307.1"/>
    <property type="molecule type" value="mRNA"/>
</dbReference>
<dbReference type="EMBL" id="AK221285">
    <property type="protein sequence ID" value="BAD93995.1"/>
    <property type="status" value="ALT_FRAME"/>
    <property type="molecule type" value="mRNA"/>
</dbReference>
<dbReference type="EMBL" id="AK318648">
    <property type="protein sequence ID" value="BAH56763.1"/>
    <property type="molecule type" value="mRNA"/>
</dbReference>
<dbReference type="EMBL" id="AY085216">
    <property type="protein sequence ID" value="AAM62449.1"/>
    <property type="molecule type" value="mRNA"/>
</dbReference>
<dbReference type="PIR" id="D84710">
    <property type="entry name" value="D84710"/>
</dbReference>
<dbReference type="PIR" id="E84710">
    <property type="entry name" value="E84710"/>
</dbReference>
<dbReference type="RefSeq" id="NP_001031447.1">
    <molecule id="Q8LEV3-1"/>
    <property type="nucleotide sequence ID" value="NM_001036370.2"/>
</dbReference>
<dbReference type="RefSeq" id="NP_001031448.1">
    <molecule id="Q8LEV3-1"/>
    <property type="nucleotide sequence ID" value="NM_001036371.2"/>
</dbReference>
<dbReference type="RefSeq" id="NP_180618.2">
    <molecule id="Q8LEV3-1"/>
    <property type="nucleotide sequence ID" value="NM_128612.3"/>
</dbReference>
<dbReference type="RefSeq" id="NP_850151.1">
    <molecule id="Q8LEV3-1"/>
    <property type="nucleotide sequence ID" value="NM_179820.2"/>
</dbReference>
<dbReference type="SMR" id="Q8LEV3"/>
<dbReference type="FunCoup" id="Q8LEV3">
    <property type="interactions" value="25"/>
</dbReference>
<dbReference type="STRING" id="3702.Q8LEV3"/>
<dbReference type="GlyGen" id="Q8LEV3">
    <property type="glycosylation" value="1 site"/>
</dbReference>
<dbReference type="iPTMnet" id="Q8LEV3"/>
<dbReference type="PaxDb" id="3702-AT2G30600.5"/>
<dbReference type="EnsemblPlants" id="AT2G30600.1">
    <molecule id="Q8LEV3-1"/>
    <property type="protein sequence ID" value="AT2G30600.1"/>
    <property type="gene ID" value="AT2G30600"/>
</dbReference>
<dbReference type="EnsemblPlants" id="AT2G30600.2">
    <molecule id="Q8LEV3-1"/>
    <property type="protein sequence ID" value="AT2G30600.2"/>
    <property type="gene ID" value="AT2G30600"/>
</dbReference>
<dbReference type="EnsemblPlants" id="AT2G30600.3">
    <molecule id="Q8LEV3-1"/>
    <property type="protein sequence ID" value="AT2G30600.3"/>
    <property type="gene ID" value="AT2G30600"/>
</dbReference>
<dbReference type="EnsemblPlants" id="AT2G30600.4">
    <molecule id="Q8LEV3-1"/>
    <property type="protein sequence ID" value="AT2G30600.4"/>
    <property type="gene ID" value="AT2G30600"/>
</dbReference>
<dbReference type="Gramene" id="AT2G30600.1">
    <molecule id="Q8LEV3-1"/>
    <property type="protein sequence ID" value="AT2G30600.1"/>
    <property type="gene ID" value="AT2G30600"/>
</dbReference>
<dbReference type="Gramene" id="AT2G30600.2">
    <molecule id="Q8LEV3-1"/>
    <property type="protein sequence ID" value="AT2G30600.2"/>
    <property type="gene ID" value="AT2G30600"/>
</dbReference>
<dbReference type="Gramene" id="AT2G30600.3">
    <molecule id="Q8LEV3-1"/>
    <property type="protein sequence ID" value="AT2G30600.3"/>
    <property type="gene ID" value="AT2G30600"/>
</dbReference>
<dbReference type="Gramene" id="AT2G30600.4">
    <molecule id="Q8LEV3-1"/>
    <property type="protein sequence ID" value="AT2G30600.4"/>
    <property type="gene ID" value="AT2G30600"/>
</dbReference>
<dbReference type="KEGG" id="ath:AT2G30600"/>
<dbReference type="Araport" id="AT2G30600"/>
<dbReference type="TAIR" id="AT2G30600"/>
<dbReference type="eggNOG" id="KOG4276">
    <property type="taxonomic scope" value="Eukaryota"/>
</dbReference>
<dbReference type="eggNOG" id="KOG4441">
    <property type="taxonomic scope" value="Eukaryota"/>
</dbReference>
<dbReference type="InParanoid" id="Q8LEV3"/>
<dbReference type="PhylomeDB" id="Q8LEV3"/>
<dbReference type="UniPathway" id="UPA00143"/>
<dbReference type="PRO" id="PR:Q8LEV3"/>
<dbReference type="Proteomes" id="UP000006548">
    <property type="component" value="Chromosome 2"/>
</dbReference>
<dbReference type="ExpressionAtlas" id="Q8LEV3">
    <property type="expression patterns" value="baseline and differential"/>
</dbReference>
<dbReference type="GO" id="GO:0016567">
    <property type="term" value="P:protein ubiquitination"/>
    <property type="evidence" value="ECO:0007669"/>
    <property type="project" value="UniProtKB-UniPathway"/>
</dbReference>
<dbReference type="CDD" id="cd18186">
    <property type="entry name" value="BTB_POZ_ZBTB_KLHL-like"/>
    <property type="match status" value="2"/>
</dbReference>
<dbReference type="Gene3D" id="1.25.40.420">
    <property type="match status" value="1"/>
</dbReference>
<dbReference type="Gene3D" id="2.60.120.260">
    <property type="entry name" value="Galactose-binding domain-like"/>
    <property type="match status" value="1"/>
</dbReference>
<dbReference type="Gene3D" id="3.30.710.10">
    <property type="entry name" value="Potassium Channel Kv1.1, Chain A"/>
    <property type="match status" value="2"/>
</dbReference>
<dbReference type="InterPro" id="IPR011705">
    <property type="entry name" value="BACK"/>
</dbReference>
<dbReference type="InterPro" id="IPR000210">
    <property type="entry name" value="BTB/POZ_dom"/>
</dbReference>
<dbReference type="InterPro" id="IPR000421">
    <property type="entry name" value="FA58C"/>
</dbReference>
<dbReference type="InterPro" id="IPR008979">
    <property type="entry name" value="Galactose-bd-like_sf"/>
</dbReference>
<dbReference type="InterPro" id="IPR022041">
    <property type="entry name" value="Methyltransf_FA"/>
</dbReference>
<dbReference type="InterPro" id="IPR011333">
    <property type="entry name" value="SKP1/BTB/POZ_sf"/>
</dbReference>
<dbReference type="PANTHER" id="PTHR47457:SF1">
    <property type="entry name" value="BTB DOMAIN-CONTAINING PROTEIN-RELATED"/>
    <property type="match status" value="1"/>
</dbReference>
<dbReference type="PANTHER" id="PTHR47457">
    <property type="entry name" value="OS05G0345500 PROTEIN"/>
    <property type="match status" value="1"/>
</dbReference>
<dbReference type="Pfam" id="PF07707">
    <property type="entry name" value="BACK"/>
    <property type="match status" value="1"/>
</dbReference>
<dbReference type="Pfam" id="PF00651">
    <property type="entry name" value="BTB"/>
    <property type="match status" value="2"/>
</dbReference>
<dbReference type="Pfam" id="PF00754">
    <property type="entry name" value="F5_F8_type_C"/>
    <property type="match status" value="1"/>
</dbReference>
<dbReference type="Pfam" id="PF12248">
    <property type="entry name" value="Methyltransf_FA"/>
    <property type="match status" value="1"/>
</dbReference>
<dbReference type="SMART" id="SM00875">
    <property type="entry name" value="BACK"/>
    <property type="match status" value="1"/>
</dbReference>
<dbReference type="SMART" id="SM00225">
    <property type="entry name" value="BTB"/>
    <property type="match status" value="2"/>
</dbReference>
<dbReference type="SUPFAM" id="SSF49785">
    <property type="entry name" value="Galactose-binding domain-like"/>
    <property type="match status" value="1"/>
</dbReference>
<dbReference type="SUPFAM" id="SSF54695">
    <property type="entry name" value="POZ domain"/>
    <property type="match status" value="2"/>
</dbReference>
<dbReference type="PROSITE" id="PS50097">
    <property type="entry name" value="BTB"/>
    <property type="match status" value="2"/>
</dbReference>
<feature type="chain" id="PRO_0000406779" description="BTB/POZ domain-containing protein At2g30600">
    <location>
        <begin position="1"/>
        <end position="809"/>
    </location>
</feature>
<feature type="domain" description="BTB 1" evidence="2">
    <location>
        <begin position="211"/>
        <end position="273"/>
    </location>
</feature>
<feature type="domain" description="BTB 2" evidence="2">
    <location>
        <begin position="351"/>
        <end position="420"/>
    </location>
</feature>
<feature type="domain" description="BACK">
    <location>
        <begin position="466"/>
        <end position="537"/>
    </location>
</feature>
<feature type="splice variant" id="VSP_040843" description="In isoform 2." evidence="4">
    <original>DSVCSVLQVVSSISSCKLIEEMCK</original>
    <variation>GWRSVLEEGFCMLSSPSGFVYLIM</variation>
    <location>
        <begin position="458"/>
        <end position="481"/>
    </location>
</feature>
<feature type="splice variant" id="VSP_040844" description="In isoform 2." evidence="4">
    <location>
        <begin position="482"/>
        <end position="809"/>
    </location>
</feature>
<feature type="sequence conflict" description="In Ref. 4; BAH56763." evidence="5" ref="4">
    <original>Q</original>
    <variation>R</variation>
    <location>
        <position position="103"/>
    </location>
</feature>
<feature type="sequence conflict" description="In Ref. 4; BAH56763." evidence="5" ref="4">
    <original>S</original>
    <variation>F</variation>
    <location>
        <position position="284"/>
    </location>
</feature>
<keyword id="KW-0025">Alternative splicing</keyword>
<keyword id="KW-1185">Reference proteome</keyword>
<keyword id="KW-0677">Repeat</keyword>
<keyword id="KW-0833">Ubl conjugation pathway</keyword>
<organism>
    <name type="scientific">Arabidopsis thaliana</name>
    <name type="common">Mouse-ear cress</name>
    <dbReference type="NCBI Taxonomy" id="3702"/>
    <lineage>
        <taxon>Eukaryota</taxon>
        <taxon>Viridiplantae</taxon>
        <taxon>Streptophyta</taxon>
        <taxon>Embryophyta</taxon>
        <taxon>Tracheophyta</taxon>
        <taxon>Spermatophyta</taxon>
        <taxon>Magnoliopsida</taxon>
        <taxon>eudicotyledons</taxon>
        <taxon>Gunneridae</taxon>
        <taxon>Pentapetalae</taxon>
        <taxon>rosids</taxon>
        <taxon>malvids</taxon>
        <taxon>Brassicales</taxon>
        <taxon>Brassicaceae</taxon>
        <taxon>Camelineae</taxon>
        <taxon>Arabidopsis</taxon>
    </lineage>
</organism>
<proteinExistence type="evidence at transcript level"/>
<reference key="1">
    <citation type="journal article" date="1999" name="Nature">
        <title>Sequence and analysis of chromosome 2 of the plant Arabidopsis thaliana.</title>
        <authorList>
            <person name="Lin X."/>
            <person name="Kaul S."/>
            <person name="Rounsley S.D."/>
            <person name="Shea T.P."/>
            <person name="Benito M.-I."/>
            <person name="Town C.D."/>
            <person name="Fujii C.Y."/>
            <person name="Mason T.M."/>
            <person name="Bowman C.L."/>
            <person name="Barnstead M.E."/>
            <person name="Feldblyum T.V."/>
            <person name="Buell C.R."/>
            <person name="Ketchum K.A."/>
            <person name="Lee J.J."/>
            <person name="Ronning C.M."/>
            <person name="Koo H.L."/>
            <person name="Moffat K.S."/>
            <person name="Cronin L.A."/>
            <person name="Shen M."/>
            <person name="Pai G."/>
            <person name="Van Aken S."/>
            <person name="Umayam L."/>
            <person name="Tallon L.J."/>
            <person name="Gill J.E."/>
            <person name="Adams M.D."/>
            <person name="Carrera A.J."/>
            <person name="Creasy T.H."/>
            <person name="Goodman H.M."/>
            <person name="Somerville C.R."/>
            <person name="Copenhaver G.P."/>
            <person name="Preuss D."/>
            <person name="Nierman W.C."/>
            <person name="White O."/>
            <person name="Eisen J.A."/>
            <person name="Salzberg S.L."/>
            <person name="Fraser C.M."/>
            <person name="Venter J.C."/>
        </authorList>
    </citation>
    <scope>NUCLEOTIDE SEQUENCE [LARGE SCALE GENOMIC DNA]</scope>
    <source>
        <strain>cv. Columbia</strain>
    </source>
</reference>
<reference key="2">
    <citation type="journal article" date="2017" name="Plant J.">
        <title>Araport11: a complete reannotation of the Arabidopsis thaliana reference genome.</title>
        <authorList>
            <person name="Cheng C.Y."/>
            <person name="Krishnakumar V."/>
            <person name="Chan A.P."/>
            <person name="Thibaud-Nissen F."/>
            <person name="Schobel S."/>
            <person name="Town C.D."/>
        </authorList>
    </citation>
    <scope>GENOME REANNOTATION</scope>
    <source>
        <strain>cv. Columbia</strain>
    </source>
</reference>
<reference key="3">
    <citation type="submission" date="2005-03" db="EMBL/GenBank/DDBJ databases">
        <title>Large-scale analysis of RIKEN Arabidopsis full-length (RAFL) cDNAs.</title>
        <authorList>
            <person name="Totoki Y."/>
            <person name="Seki M."/>
            <person name="Ishida J."/>
            <person name="Nakajima M."/>
            <person name="Enju A."/>
            <person name="Kamiya A."/>
            <person name="Narusaka M."/>
            <person name="Shin-i T."/>
            <person name="Nakagawa M."/>
            <person name="Sakamoto N."/>
            <person name="Oishi K."/>
            <person name="Kohara Y."/>
            <person name="Kobayashi M."/>
            <person name="Toyoda A."/>
            <person name="Sakaki Y."/>
            <person name="Sakurai T."/>
            <person name="Iida K."/>
            <person name="Akiyama K."/>
            <person name="Satou M."/>
            <person name="Toyoda T."/>
            <person name="Konagaya A."/>
            <person name="Carninci P."/>
            <person name="Kawai J."/>
            <person name="Hayashizaki Y."/>
            <person name="Shinozaki K."/>
        </authorList>
    </citation>
    <scope>NUCLEOTIDE SEQUENCE [LARGE SCALE MRNA] (ISOFORM 1)</scope>
    <source>
        <strain>cv. Columbia</strain>
    </source>
</reference>
<reference key="4">
    <citation type="journal article" date="2009" name="DNA Res.">
        <title>Analysis of multiple occurrences of alternative splicing events in Arabidopsis thaliana using novel sequenced full-length cDNAs.</title>
        <authorList>
            <person name="Iida K."/>
            <person name="Fukami-Kobayashi K."/>
            <person name="Toyoda A."/>
            <person name="Sakaki Y."/>
            <person name="Kobayashi M."/>
            <person name="Seki M."/>
            <person name="Shinozaki K."/>
        </authorList>
    </citation>
    <scope>NUCLEOTIDE SEQUENCE [LARGE SCALE MRNA] (ISOFORM 2)</scope>
    <source>
        <strain>cv. Columbia</strain>
        <tissue>Rosette leaf</tissue>
    </source>
</reference>
<reference key="5">
    <citation type="submission" date="2002-03" db="EMBL/GenBank/DDBJ databases">
        <title>Full-length cDNA from Arabidopsis thaliana.</title>
        <authorList>
            <person name="Brover V.V."/>
            <person name="Troukhan M.E."/>
            <person name="Alexandrov N.A."/>
            <person name="Lu Y.-P."/>
            <person name="Flavell R.B."/>
            <person name="Feldmann K.A."/>
        </authorList>
    </citation>
    <scope>NUCLEOTIDE SEQUENCE [LARGE SCALE MRNA] (ISOFORM 1)</scope>
</reference>
<reference key="6">
    <citation type="journal article" date="2005" name="J. Biol. Chem.">
        <title>Cullins 3a and 3b assemble with members of the broad complex/tramtrack/bric-a-brac (BTB) protein family to form essential ubiquitin-protein ligases (E3s) in Arabidopsis.</title>
        <authorList>
            <person name="Gingerich D.J."/>
            <person name="Gagne J.M."/>
            <person name="Salter D.W."/>
            <person name="Hellmann H."/>
            <person name="Estelle M."/>
            <person name="Ma L."/>
            <person name="Vierstra R.D."/>
        </authorList>
    </citation>
    <scope>DOMAIN BTB</scope>
</reference>
<gene>
    <name type="ordered locus">At2g30600/At2g30610</name>
    <name type="ORF">T6B20.5/T6B20.4</name>
</gene>
<evidence type="ECO:0000250" key="1"/>
<evidence type="ECO:0000255" key="2">
    <source>
        <dbReference type="PROSITE-ProRule" id="PRU00037"/>
    </source>
</evidence>
<evidence type="ECO:0000269" key="3">
    <source>
    </source>
</evidence>
<evidence type="ECO:0000303" key="4">
    <source>
    </source>
</evidence>
<evidence type="ECO:0000305" key="5"/>
<protein>
    <recommendedName>
        <fullName>BTB/POZ domain-containing protein At2g30600</fullName>
    </recommendedName>
</protein>
<comment type="function">
    <text evidence="1">May act as a substrate-specific adapter of an E3 ubiquitin-protein ligase complex (CUL3-RBX1-BTB) which mediates the ubiquitination and subsequent proteasomal degradation of target proteins.</text>
</comment>
<comment type="pathway">
    <text>Protein modification; protein ubiquitination.</text>
</comment>
<comment type="alternative products">
    <event type="alternative splicing"/>
    <isoform>
        <id>Q8LEV3-1</id>
        <name>1</name>
        <sequence type="displayed"/>
    </isoform>
    <isoform>
        <id>Q8LEV3-2</id>
        <name>2</name>
        <sequence type="described" ref="VSP_040843 VSP_040844"/>
    </isoform>
</comment>
<comment type="domain">
    <text evidence="3">The BTB/POZ domain mediates the interaction with some component of ubiquitin ligase complexes.</text>
</comment>
<comment type="sequence caution" evidence="5">
    <conflict type="erroneous gene model prediction">
        <sequence resource="EMBL-CDS" id="AAB63076"/>
    </conflict>
    <text>Was originally thought to correspond to two different genes At2g30600 and At2g30610.</text>
</comment>
<comment type="sequence caution" evidence="5">
    <conflict type="erroneous gene model prediction">
        <sequence resource="EMBL-CDS" id="AAB63077"/>
    </conflict>
    <text>Was originally thought to correspond to two different genes At2g30600 and At2g30610.</text>
</comment>
<comment type="sequence caution" evidence="5">
    <conflict type="frameshift">
        <sequence resource="EMBL-CDS" id="BAD93995"/>
    </conflict>
</comment>
<accession>Q8LEV3</accession>
<accession>C0Z234</accession>
<accession>O04334</accession>
<accession>O04335</accession>
<accession>Q56YN6</accession>
<sequence>MVAAKENKFLTVAPFECAWSDDLKFREAGRGCVAFDAFAHNDVTVVFRENVGTQHYHYKKDNSPHYIVIIGSNRNRRLKIQVDGKSVVDEEASDLCRCSLEFQSYWISIYDGLISIGKGRYPFQNLVFKWQDPKPNCNVQYVGLSSWDKHVGYRNVSVFPVTHNHILLWKQVDCREVRGDESGDEKVVEEGTGYDYEQWGLGNFLESWQLSDTVFLVGEEEMDVPAHKVILQASGNFPLRSSDGDVIQLRGVSYPILHALLQYIYTGRTQILESELAPLRDLSSKFEVMSLVRQCEESIDHFKLSKTAFDSCRKVKLLCPISHPLSGFMFPSAFPVDVGKLVKLYSTGEYSDIKIYLSDHSLTFQSHKVILSLWSVAFAKMFTNGMSESHSSTIYLTDVSPEAFKAMMNFMYSGELNMEDTVNFGTELIHLLFLADRFGVVPLHQECCKMLLECLSEDSVCSVLQVVSSISSCKLIEEMCKRKFSMHFDYCTTASLDFVLLDQTTFSDILESADLTVTSEEKILNAVLMWCMKAEESHSWGVIDEMMNYADPKSLFKERLQSLDDLLPHVRFSLLPYELLKRLENSNLSKEIPVFNRLLKEAASFLTSGLISPGNEPISRFQHRRSSFKELQYIRDGDSNGVLHFVGTSYGSHQWVNPVLAKKINITSSSPTSRFTDPKALASKAYAGTSFAGPRMEDGHISSWWVVDLGEEHQLMCNYYTFRQDGSRAFTRFWKFQGSMDGKTWTDLRVHEDDQTMCKAGQFASWPITAANALLPFRFFRLVLTGPTADTSTPWNFCICYLELYGYFR</sequence>